<dbReference type="EC" id="6.1.1.20" evidence="1"/>
<dbReference type="EMBL" id="AP009324">
    <property type="protein sequence ID" value="BAF78012.1"/>
    <property type="molecule type" value="Genomic_DNA"/>
</dbReference>
<dbReference type="RefSeq" id="WP_000003566.1">
    <property type="nucleotide sequence ID" value="NC_009782.1"/>
</dbReference>
<dbReference type="SMR" id="A7X160"/>
<dbReference type="KEGG" id="saw:SAHV_1129"/>
<dbReference type="HOGENOM" id="CLU_025086_0_1_9"/>
<dbReference type="GO" id="GO:0005737">
    <property type="term" value="C:cytoplasm"/>
    <property type="evidence" value="ECO:0007669"/>
    <property type="project" value="UniProtKB-SubCell"/>
</dbReference>
<dbReference type="GO" id="GO:0005524">
    <property type="term" value="F:ATP binding"/>
    <property type="evidence" value="ECO:0007669"/>
    <property type="project" value="UniProtKB-UniRule"/>
</dbReference>
<dbReference type="GO" id="GO:0140096">
    <property type="term" value="F:catalytic activity, acting on a protein"/>
    <property type="evidence" value="ECO:0007669"/>
    <property type="project" value="UniProtKB-ARBA"/>
</dbReference>
<dbReference type="GO" id="GO:0000287">
    <property type="term" value="F:magnesium ion binding"/>
    <property type="evidence" value="ECO:0007669"/>
    <property type="project" value="UniProtKB-UniRule"/>
</dbReference>
<dbReference type="GO" id="GO:0004826">
    <property type="term" value="F:phenylalanine-tRNA ligase activity"/>
    <property type="evidence" value="ECO:0007669"/>
    <property type="project" value="UniProtKB-UniRule"/>
</dbReference>
<dbReference type="GO" id="GO:0016740">
    <property type="term" value="F:transferase activity"/>
    <property type="evidence" value="ECO:0007669"/>
    <property type="project" value="UniProtKB-ARBA"/>
</dbReference>
<dbReference type="GO" id="GO:0000049">
    <property type="term" value="F:tRNA binding"/>
    <property type="evidence" value="ECO:0007669"/>
    <property type="project" value="InterPro"/>
</dbReference>
<dbReference type="GO" id="GO:0006432">
    <property type="term" value="P:phenylalanyl-tRNA aminoacylation"/>
    <property type="evidence" value="ECO:0007669"/>
    <property type="project" value="UniProtKB-UniRule"/>
</dbReference>
<dbReference type="CDD" id="cd00496">
    <property type="entry name" value="PheRS_alpha_core"/>
    <property type="match status" value="1"/>
</dbReference>
<dbReference type="FunFam" id="3.30.930.10:FF:000003">
    <property type="entry name" value="Phenylalanine--tRNA ligase alpha subunit"/>
    <property type="match status" value="1"/>
</dbReference>
<dbReference type="Gene3D" id="3.30.930.10">
    <property type="entry name" value="Bira Bifunctional Protein, Domain 2"/>
    <property type="match status" value="1"/>
</dbReference>
<dbReference type="HAMAP" id="MF_00281">
    <property type="entry name" value="Phe_tRNA_synth_alpha1"/>
    <property type="match status" value="1"/>
</dbReference>
<dbReference type="InterPro" id="IPR006195">
    <property type="entry name" value="aa-tRNA-synth_II"/>
</dbReference>
<dbReference type="InterPro" id="IPR045864">
    <property type="entry name" value="aa-tRNA-synth_II/BPL/LPL"/>
</dbReference>
<dbReference type="InterPro" id="IPR004529">
    <property type="entry name" value="Phe-tRNA-synth_IIc_asu"/>
</dbReference>
<dbReference type="InterPro" id="IPR004188">
    <property type="entry name" value="Phe-tRNA_ligase_II_N"/>
</dbReference>
<dbReference type="InterPro" id="IPR022911">
    <property type="entry name" value="Phe_tRNA_ligase_alpha1_bac"/>
</dbReference>
<dbReference type="InterPro" id="IPR002319">
    <property type="entry name" value="Phenylalanyl-tRNA_Synthase"/>
</dbReference>
<dbReference type="InterPro" id="IPR010978">
    <property type="entry name" value="tRNA-bd_arm"/>
</dbReference>
<dbReference type="NCBIfam" id="TIGR00468">
    <property type="entry name" value="pheS"/>
    <property type="match status" value="1"/>
</dbReference>
<dbReference type="PANTHER" id="PTHR11538:SF41">
    <property type="entry name" value="PHENYLALANINE--TRNA LIGASE, MITOCHONDRIAL"/>
    <property type="match status" value="1"/>
</dbReference>
<dbReference type="PANTHER" id="PTHR11538">
    <property type="entry name" value="PHENYLALANYL-TRNA SYNTHETASE"/>
    <property type="match status" value="1"/>
</dbReference>
<dbReference type="Pfam" id="PF02912">
    <property type="entry name" value="Phe_tRNA-synt_N"/>
    <property type="match status" value="1"/>
</dbReference>
<dbReference type="Pfam" id="PF01409">
    <property type="entry name" value="tRNA-synt_2d"/>
    <property type="match status" value="1"/>
</dbReference>
<dbReference type="SUPFAM" id="SSF55681">
    <property type="entry name" value="Class II aaRS and biotin synthetases"/>
    <property type="match status" value="1"/>
</dbReference>
<dbReference type="SUPFAM" id="SSF46589">
    <property type="entry name" value="tRNA-binding arm"/>
    <property type="match status" value="1"/>
</dbReference>
<dbReference type="PROSITE" id="PS50862">
    <property type="entry name" value="AA_TRNA_LIGASE_II"/>
    <property type="match status" value="1"/>
</dbReference>
<organism>
    <name type="scientific">Staphylococcus aureus (strain Mu3 / ATCC 700698)</name>
    <dbReference type="NCBI Taxonomy" id="418127"/>
    <lineage>
        <taxon>Bacteria</taxon>
        <taxon>Bacillati</taxon>
        <taxon>Bacillota</taxon>
        <taxon>Bacilli</taxon>
        <taxon>Bacillales</taxon>
        <taxon>Staphylococcaceae</taxon>
        <taxon>Staphylococcus</taxon>
    </lineage>
</organism>
<reference key="1">
    <citation type="journal article" date="2008" name="Antimicrob. Agents Chemother.">
        <title>Mutated response regulator graR is responsible for phenotypic conversion of Staphylococcus aureus from heterogeneous vancomycin-intermediate resistance to vancomycin-intermediate resistance.</title>
        <authorList>
            <person name="Neoh H.-M."/>
            <person name="Cui L."/>
            <person name="Yuzawa H."/>
            <person name="Takeuchi F."/>
            <person name="Matsuo M."/>
            <person name="Hiramatsu K."/>
        </authorList>
    </citation>
    <scope>NUCLEOTIDE SEQUENCE [LARGE SCALE GENOMIC DNA]</scope>
    <source>
        <strain>Mu3 / ATCC 700698</strain>
    </source>
</reference>
<name>SYFA_STAA1</name>
<sequence length="352" mass="40121">MSEQQTMSELKQQALVDINEANDERALQEVKVKYLGKKGSVSGLMKLMKDLPNEEKPAFGQKVNELRQTIQNELDERQQMLVKEKLNKQLAEETIDVSLPGRHIEIGSKHPLTRTIEEIEDLFLGLGYEIVNGYEVEQDHYNFEMLNLPKSHPARDMQDSFYITDEILLRTHTSPVQARTMESRHGQGPVKIICPGKVYRRDSDDATHSHQFTQIEGLVVDKNVKMSDLKGTLELLAKKLFGADREIRLRPSYFPFTEPSVEVDVSCFKCKGKGCNVCKHTGWIEILGAGMVHPNVLEMAGFDSSEYSGFAFGMGPDRIAMLKYGIEDIRHFYTNDVRFLDQFKAVEDRGDM</sequence>
<keyword id="KW-0030">Aminoacyl-tRNA synthetase</keyword>
<keyword id="KW-0067">ATP-binding</keyword>
<keyword id="KW-0963">Cytoplasm</keyword>
<keyword id="KW-0436">Ligase</keyword>
<keyword id="KW-0460">Magnesium</keyword>
<keyword id="KW-0479">Metal-binding</keyword>
<keyword id="KW-0547">Nucleotide-binding</keyword>
<keyword id="KW-0648">Protein biosynthesis</keyword>
<feature type="chain" id="PRO_1000006905" description="Phenylalanine--tRNA ligase alpha subunit">
    <location>
        <begin position="1"/>
        <end position="352"/>
    </location>
</feature>
<feature type="binding site" evidence="1">
    <location>
        <position position="258"/>
    </location>
    <ligand>
        <name>Mg(2+)</name>
        <dbReference type="ChEBI" id="CHEBI:18420"/>
        <note>shared with beta subunit</note>
    </ligand>
</feature>
<comment type="catalytic activity">
    <reaction evidence="1">
        <text>tRNA(Phe) + L-phenylalanine + ATP = L-phenylalanyl-tRNA(Phe) + AMP + diphosphate + H(+)</text>
        <dbReference type="Rhea" id="RHEA:19413"/>
        <dbReference type="Rhea" id="RHEA-COMP:9668"/>
        <dbReference type="Rhea" id="RHEA-COMP:9699"/>
        <dbReference type="ChEBI" id="CHEBI:15378"/>
        <dbReference type="ChEBI" id="CHEBI:30616"/>
        <dbReference type="ChEBI" id="CHEBI:33019"/>
        <dbReference type="ChEBI" id="CHEBI:58095"/>
        <dbReference type="ChEBI" id="CHEBI:78442"/>
        <dbReference type="ChEBI" id="CHEBI:78531"/>
        <dbReference type="ChEBI" id="CHEBI:456215"/>
        <dbReference type="EC" id="6.1.1.20"/>
    </reaction>
</comment>
<comment type="cofactor">
    <cofactor evidence="1">
        <name>Mg(2+)</name>
        <dbReference type="ChEBI" id="CHEBI:18420"/>
    </cofactor>
    <text evidence="1">Binds 2 magnesium ions per tetramer.</text>
</comment>
<comment type="subunit">
    <text evidence="1">Tetramer of two alpha and two beta subunits.</text>
</comment>
<comment type="subcellular location">
    <subcellularLocation>
        <location evidence="1">Cytoplasm</location>
    </subcellularLocation>
</comment>
<comment type="similarity">
    <text evidence="1">Belongs to the class-II aminoacyl-tRNA synthetase family. Phe-tRNA synthetase alpha subunit type 1 subfamily.</text>
</comment>
<accession>A7X160</accession>
<protein>
    <recommendedName>
        <fullName evidence="1">Phenylalanine--tRNA ligase alpha subunit</fullName>
        <ecNumber evidence="1">6.1.1.20</ecNumber>
    </recommendedName>
    <alternativeName>
        <fullName evidence="1">Phenylalanyl-tRNA synthetase alpha subunit</fullName>
        <shortName evidence="1">PheRS</shortName>
    </alternativeName>
</protein>
<evidence type="ECO:0000255" key="1">
    <source>
        <dbReference type="HAMAP-Rule" id="MF_00281"/>
    </source>
</evidence>
<gene>
    <name evidence="1" type="primary">pheS</name>
    <name type="ordered locus">SAHV_1129</name>
</gene>
<proteinExistence type="inferred from homology"/>